<feature type="chain" id="PRO_0000084022" description="Histamine N-methyltransferase">
    <location>
        <begin position="1"/>
        <end position="295"/>
    </location>
</feature>
<feature type="binding site" evidence="2">
    <location>
        <position position="28"/>
    </location>
    <ligand>
        <name>substrate</name>
    </ligand>
</feature>
<feature type="binding site" evidence="2">
    <location>
        <position position="60"/>
    </location>
    <ligand>
        <name>S-adenosyl-L-methionine</name>
        <dbReference type="ChEBI" id="CHEBI:59789"/>
    </ligand>
</feature>
<feature type="binding site" evidence="2">
    <location>
        <position position="89"/>
    </location>
    <ligand>
        <name>S-adenosyl-L-methionine</name>
        <dbReference type="ChEBI" id="CHEBI:59789"/>
    </ligand>
</feature>
<feature type="binding site" evidence="2">
    <location>
        <position position="94"/>
    </location>
    <ligand>
        <name>S-adenosyl-L-methionine</name>
        <dbReference type="ChEBI" id="CHEBI:59789"/>
    </ligand>
</feature>
<feature type="binding site" evidence="2">
    <location>
        <position position="120"/>
    </location>
    <ligand>
        <name>S-adenosyl-L-methionine</name>
        <dbReference type="ChEBI" id="CHEBI:59789"/>
    </ligand>
</feature>
<feature type="binding site" evidence="2">
    <location>
        <position position="143"/>
    </location>
    <ligand>
        <name>S-adenosyl-L-methionine</name>
        <dbReference type="ChEBI" id="CHEBI:59789"/>
    </ligand>
</feature>
<feature type="binding site" evidence="2">
    <location>
        <position position="284"/>
    </location>
    <ligand>
        <name>substrate</name>
    </ligand>
</feature>
<dbReference type="EC" id="2.1.1.8" evidence="3"/>
<dbReference type="EMBL" id="AF297037">
    <property type="protein sequence ID" value="AAL09305.1"/>
    <property type="molecule type" value="mRNA"/>
</dbReference>
<dbReference type="EMBL" id="AF298150">
    <property type="protein sequence ID" value="AAL09306.1"/>
    <property type="molecule type" value="Genomic_DNA"/>
</dbReference>
<dbReference type="EMBL" id="AF297039">
    <property type="protein sequence ID" value="AAL09306.1"/>
    <property type="status" value="JOINED"/>
    <property type="molecule type" value="Genomic_DNA"/>
</dbReference>
<dbReference type="EMBL" id="AF297040">
    <property type="protein sequence ID" value="AAL09306.1"/>
    <property type="status" value="JOINED"/>
    <property type="molecule type" value="Genomic_DNA"/>
</dbReference>
<dbReference type="EMBL" id="AF297041">
    <property type="protein sequence ID" value="AAL09306.1"/>
    <property type="status" value="JOINED"/>
    <property type="molecule type" value="Genomic_DNA"/>
</dbReference>
<dbReference type="EMBL" id="AF297042">
    <property type="protein sequence ID" value="AAL09306.1"/>
    <property type="status" value="JOINED"/>
    <property type="molecule type" value="Genomic_DNA"/>
</dbReference>
<dbReference type="EMBL" id="AF297043">
    <property type="protein sequence ID" value="AAL09306.1"/>
    <property type="status" value="JOINED"/>
    <property type="molecule type" value="Genomic_DNA"/>
</dbReference>
<dbReference type="EMBL" id="AB070523">
    <property type="protein sequence ID" value="BAB84320.1"/>
    <property type="molecule type" value="Genomic_DNA"/>
</dbReference>
<dbReference type="EMBL" id="AB070524">
    <property type="protein sequence ID" value="BAB84318.1"/>
    <property type="molecule type" value="mRNA"/>
</dbReference>
<dbReference type="EMBL" id="AK050129">
    <property type="protein sequence ID" value="BAC34081.1"/>
    <property type="molecule type" value="mRNA"/>
</dbReference>
<dbReference type="EMBL" id="AK160131">
    <property type="protein sequence ID" value="BAE35648.1"/>
    <property type="molecule type" value="mRNA"/>
</dbReference>
<dbReference type="EMBL" id="BC033928">
    <property type="protein sequence ID" value="AAH33928.1"/>
    <property type="molecule type" value="mRNA"/>
</dbReference>
<dbReference type="CCDS" id="CCDS15731.1"/>
<dbReference type="RefSeq" id="NP_536710.1">
    <property type="nucleotide sequence ID" value="NM_080462.2"/>
</dbReference>
<dbReference type="RefSeq" id="XP_006497734.1">
    <property type="nucleotide sequence ID" value="XM_006497671.5"/>
</dbReference>
<dbReference type="SMR" id="Q91VF2"/>
<dbReference type="FunCoup" id="Q91VF2">
    <property type="interactions" value="918"/>
</dbReference>
<dbReference type="STRING" id="10090.ENSMUSP00000062747"/>
<dbReference type="GlyGen" id="Q91VF2">
    <property type="glycosylation" value="2 sites, 1 N-linked glycan (1 site), 1 O-linked glycan (1 site)"/>
</dbReference>
<dbReference type="iPTMnet" id="Q91VF2"/>
<dbReference type="PhosphoSitePlus" id="Q91VF2"/>
<dbReference type="jPOST" id="Q91VF2"/>
<dbReference type="PaxDb" id="10090-ENSMUSP00000062747"/>
<dbReference type="ProteomicsDB" id="269609"/>
<dbReference type="Antibodypedia" id="33593">
    <property type="antibodies" value="306 antibodies from 32 providers"/>
</dbReference>
<dbReference type="DNASU" id="140483"/>
<dbReference type="Ensembl" id="ENSMUST00000051416.12">
    <property type="protein sequence ID" value="ENSMUSP00000062747.6"/>
    <property type="gene ID" value="ENSMUSG00000026986.15"/>
</dbReference>
<dbReference type="Ensembl" id="ENSMUST00000114497.2">
    <property type="protein sequence ID" value="ENSMUSP00000110141.2"/>
    <property type="gene ID" value="ENSMUSG00000026986.15"/>
</dbReference>
<dbReference type="Ensembl" id="ENSMUST00000114498.8">
    <property type="protein sequence ID" value="ENSMUSP00000110142.2"/>
    <property type="gene ID" value="ENSMUSG00000026986.15"/>
</dbReference>
<dbReference type="GeneID" id="140483"/>
<dbReference type="KEGG" id="mmu:140483"/>
<dbReference type="UCSC" id="uc008iok.2">
    <property type="organism name" value="mouse"/>
</dbReference>
<dbReference type="AGR" id="MGI:2153181"/>
<dbReference type="CTD" id="3176"/>
<dbReference type="MGI" id="MGI:2153181">
    <property type="gene designation" value="Hnmt"/>
</dbReference>
<dbReference type="VEuPathDB" id="HostDB:ENSMUSG00000026986"/>
<dbReference type="eggNOG" id="ENOG502QQJ1">
    <property type="taxonomic scope" value="Eukaryota"/>
</dbReference>
<dbReference type="GeneTree" id="ENSGT00390000002862"/>
<dbReference type="HOGENOM" id="CLU_058117_1_0_1"/>
<dbReference type="InParanoid" id="Q91VF2"/>
<dbReference type="OMA" id="KNIKFAW"/>
<dbReference type="OrthoDB" id="5984880at2759"/>
<dbReference type="PhylomeDB" id="Q91VF2"/>
<dbReference type="TreeFam" id="TF331080"/>
<dbReference type="BRENDA" id="2.1.1.8">
    <property type="organism ID" value="3474"/>
</dbReference>
<dbReference type="SABIO-RK" id="Q91VF2"/>
<dbReference type="BioGRID-ORCS" id="140483">
    <property type="hits" value="3 hits in 77 CRISPR screens"/>
</dbReference>
<dbReference type="PRO" id="PR:Q91VF2"/>
<dbReference type="Proteomes" id="UP000000589">
    <property type="component" value="Chromosome 2"/>
</dbReference>
<dbReference type="RNAct" id="Q91VF2">
    <property type="molecule type" value="protein"/>
</dbReference>
<dbReference type="Bgee" id="ENSMUSG00000026986">
    <property type="expression patterns" value="Expressed in parotid gland and 200 other cell types or tissues"/>
</dbReference>
<dbReference type="ExpressionAtlas" id="Q91VF2">
    <property type="expression patterns" value="baseline and differential"/>
</dbReference>
<dbReference type="GO" id="GO:0005813">
    <property type="term" value="C:centrosome"/>
    <property type="evidence" value="ECO:0007669"/>
    <property type="project" value="Ensembl"/>
</dbReference>
<dbReference type="GO" id="GO:0005737">
    <property type="term" value="C:cytoplasm"/>
    <property type="evidence" value="ECO:0000250"/>
    <property type="project" value="UniProtKB"/>
</dbReference>
<dbReference type="GO" id="GO:0005829">
    <property type="term" value="C:cytosol"/>
    <property type="evidence" value="ECO:0007669"/>
    <property type="project" value="Ensembl"/>
</dbReference>
<dbReference type="GO" id="GO:0005654">
    <property type="term" value="C:nucleoplasm"/>
    <property type="evidence" value="ECO:0007669"/>
    <property type="project" value="Ensembl"/>
</dbReference>
<dbReference type="GO" id="GO:0046539">
    <property type="term" value="F:histamine N-methyltransferase activity"/>
    <property type="evidence" value="ECO:0000250"/>
    <property type="project" value="UniProtKB"/>
</dbReference>
<dbReference type="GO" id="GO:0008170">
    <property type="term" value="F:N-methyltransferase activity"/>
    <property type="evidence" value="ECO:0000314"/>
    <property type="project" value="MGI"/>
</dbReference>
<dbReference type="GO" id="GO:0001695">
    <property type="term" value="P:histamine catabolic process"/>
    <property type="evidence" value="ECO:0000250"/>
    <property type="project" value="UniProtKB"/>
</dbReference>
<dbReference type="GO" id="GO:0006972">
    <property type="term" value="P:hyperosmotic response"/>
    <property type="evidence" value="ECO:0007669"/>
    <property type="project" value="Ensembl"/>
</dbReference>
<dbReference type="GO" id="GO:0032259">
    <property type="term" value="P:methylation"/>
    <property type="evidence" value="ECO:0007669"/>
    <property type="project" value="UniProtKB-KW"/>
</dbReference>
<dbReference type="GO" id="GO:0014075">
    <property type="term" value="P:response to amine"/>
    <property type="evidence" value="ECO:0007669"/>
    <property type="project" value="Ensembl"/>
</dbReference>
<dbReference type="GO" id="GO:0042220">
    <property type="term" value="P:response to cocaine"/>
    <property type="evidence" value="ECO:0007669"/>
    <property type="project" value="Ensembl"/>
</dbReference>
<dbReference type="GO" id="GO:0051384">
    <property type="term" value="P:response to glucocorticoid"/>
    <property type="evidence" value="ECO:0007669"/>
    <property type="project" value="Ensembl"/>
</dbReference>
<dbReference type="GO" id="GO:0035902">
    <property type="term" value="P:response to immobilization stress"/>
    <property type="evidence" value="ECO:0007669"/>
    <property type="project" value="Ensembl"/>
</dbReference>
<dbReference type="GO" id="GO:0070555">
    <property type="term" value="P:response to interleukin-1"/>
    <property type="evidence" value="ECO:0007669"/>
    <property type="project" value="Ensembl"/>
</dbReference>
<dbReference type="GO" id="GO:0002347">
    <property type="term" value="P:response to tumor cell"/>
    <property type="evidence" value="ECO:0007669"/>
    <property type="project" value="Ensembl"/>
</dbReference>
<dbReference type="GO" id="GO:0046500">
    <property type="term" value="P:S-adenosylmethionine metabolic process"/>
    <property type="evidence" value="ECO:0007669"/>
    <property type="project" value="Ensembl"/>
</dbReference>
<dbReference type="CDD" id="cd02440">
    <property type="entry name" value="AdoMet_MTases"/>
    <property type="match status" value="1"/>
</dbReference>
<dbReference type="FunFam" id="3.40.50.150:FF:000118">
    <property type="entry name" value="Histamine N-methyltransferase"/>
    <property type="match status" value="1"/>
</dbReference>
<dbReference type="Gene3D" id="3.40.50.150">
    <property type="entry name" value="Vaccinia Virus protein VP39"/>
    <property type="match status" value="1"/>
</dbReference>
<dbReference type="InterPro" id="IPR016673">
    <property type="entry name" value="HHMT-like"/>
</dbReference>
<dbReference type="InterPro" id="IPR029063">
    <property type="entry name" value="SAM-dependent_MTases_sf"/>
</dbReference>
<dbReference type="Pfam" id="PF13489">
    <property type="entry name" value="Methyltransf_23"/>
    <property type="match status" value="1"/>
</dbReference>
<dbReference type="PIRSF" id="PIRSF016616">
    <property type="entry name" value="HHMT"/>
    <property type="match status" value="1"/>
</dbReference>
<dbReference type="SUPFAM" id="SSF53335">
    <property type="entry name" value="S-adenosyl-L-methionine-dependent methyltransferases"/>
    <property type="match status" value="1"/>
</dbReference>
<dbReference type="PROSITE" id="PS51597">
    <property type="entry name" value="SAM_HNMT"/>
    <property type="match status" value="1"/>
</dbReference>
<sequence>MASCMRSLFSDQGRYVESFRRFLNNSTEHQCMQEFMDKKLPGIIARIGEAKAEIKILSVGGGAGEVDLQILSKVQAQYPGICINNEVVEPSAEQIVKYKELVAKTSNMENIKFSWHKETSSEYQKRMLEEEEEPPKWDFIHMIQMLYYVKDIPATLKFFHGLLAASAKILIILVSGTSGWEKLWKKYGSRLPRDDLCQYVTSSDLAQILDDLGIKYECYDLVSTMDITDCFIDGNENGDLLWDFLTETCNFSKTAPLDLKAEIMKDLQEPEFSVKKEGKVLFNNNLSFIVVEANV</sequence>
<protein>
    <recommendedName>
        <fullName>Histamine N-methyltransferase</fullName>
        <shortName>HMT</shortName>
        <ecNumber evidence="3">2.1.1.8</ecNumber>
    </recommendedName>
</protein>
<accession>Q91VF2</accession>
<accession>Q3TVH0</accession>
<keyword id="KW-0963">Cytoplasm</keyword>
<keyword id="KW-0489">Methyltransferase</keyword>
<keyword id="KW-1185">Reference proteome</keyword>
<keyword id="KW-0949">S-adenosyl-L-methionine</keyword>
<keyword id="KW-0808">Transferase</keyword>
<name>HNMT_MOUSE</name>
<comment type="function">
    <text evidence="3">Inactivates histamine by N-methylation. Plays an important role in degrading histamine and in regulating the airway response to histamine.</text>
</comment>
<comment type="catalytic activity">
    <reaction evidence="2 3">
        <text>histamine + S-adenosyl-L-methionine = N(tau)-methylhistamine + S-adenosyl-L-homocysteine + H(+)</text>
        <dbReference type="Rhea" id="RHEA:19301"/>
        <dbReference type="ChEBI" id="CHEBI:15378"/>
        <dbReference type="ChEBI" id="CHEBI:57856"/>
        <dbReference type="ChEBI" id="CHEBI:58432"/>
        <dbReference type="ChEBI" id="CHEBI:58600"/>
        <dbReference type="ChEBI" id="CHEBI:59789"/>
        <dbReference type="EC" id="2.1.1.8"/>
    </reaction>
</comment>
<comment type="biophysicochemical properties">
    <kinetics>
        <KM evidence="3">5.8 uM for S-adenosyl-L-methionine</KM>
        <KM evidence="3">5.3 uM for histamine</KM>
    </kinetics>
</comment>
<comment type="subunit">
    <text evidence="1">Monomer.</text>
</comment>
<comment type="subcellular location">
    <subcellularLocation>
        <location evidence="1">Cytoplasm</location>
    </subcellularLocation>
</comment>
<comment type="similarity">
    <text evidence="2">Belongs to the class I-like SAM-binding methyltransferase superfamily. HNMT family.</text>
</comment>
<evidence type="ECO:0000250" key="1">
    <source>
        <dbReference type="UniProtKB" id="P50135"/>
    </source>
</evidence>
<evidence type="ECO:0000255" key="2">
    <source>
        <dbReference type="PROSITE-ProRule" id="PRU00929"/>
    </source>
</evidence>
<evidence type="ECO:0000269" key="3">
    <source>
    </source>
</evidence>
<reference key="1">
    <citation type="journal article" date="2001" name="Inflamm. Res.">
        <title>Mouse histamine N-methyltransferase: cDNA cloning, expression, gene cloning and chromosomal localization.</title>
        <authorList>
            <person name="Wang L."/>
            <person name="Yan L."/>
            <person name="McGuire C."/>
            <person name="Kozak C.A."/>
            <person name="Wang M."/>
            <person name="Kim U.J."/>
            <person name="Siciliano M."/>
            <person name="Weinshilboum R.M."/>
        </authorList>
    </citation>
    <scope>NUCLEOTIDE SEQUENCE [GENOMIC DNA / MRNA]</scope>
    <scope>FUNCTION</scope>
    <scope>CATALYTIC ACTIVITY</scope>
    <scope>BIOPHYSICOCHEMICAL PROPERTIES</scope>
    <source>
        <strain>BALB/cJ</strain>
        <tissue>Liver</tissue>
    </source>
</reference>
<reference key="2">
    <citation type="journal article" date="2002" name="Jpn. J. Pharmacol.">
        <title>Genomic structure of the rat and mouse histamine N-methyltransferase gene.</title>
        <authorList>
            <person name="Kitanaka N."/>
            <person name="Kitanaka J."/>
            <person name="Oue T."/>
            <person name="Tada Y."/>
            <person name="Tanaka T."/>
            <person name="Takemura M."/>
        </authorList>
    </citation>
    <scope>NUCLEOTIDE SEQUENCE [GENOMIC DNA / MRNA]</scope>
    <source>
        <strain>129/Sv</strain>
        <strain>ddY</strain>
        <tissue>Liver</tissue>
    </source>
</reference>
<reference key="3">
    <citation type="journal article" date="2005" name="Science">
        <title>The transcriptional landscape of the mammalian genome.</title>
        <authorList>
            <person name="Carninci P."/>
            <person name="Kasukawa T."/>
            <person name="Katayama S."/>
            <person name="Gough J."/>
            <person name="Frith M.C."/>
            <person name="Maeda N."/>
            <person name="Oyama R."/>
            <person name="Ravasi T."/>
            <person name="Lenhard B."/>
            <person name="Wells C."/>
            <person name="Kodzius R."/>
            <person name="Shimokawa K."/>
            <person name="Bajic V.B."/>
            <person name="Brenner S.E."/>
            <person name="Batalov S."/>
            <person name="Forrest A.R."/>
            <person name="Zavolan M."/>
            <person name="Davis M.J."/>
            <person name="Wilming L.G."/>
            <person name="Aidinis V."/>
            <person name="Allen J.E."/>
            <person name="Ambesi-Impiombato A."/>
            <person name="Apweiler R."/>
            <person name="Aturaliya R.N."/>
            <person name="Bailey T.L."/>
            <person name="Bansal M."/>
            <person name="Baxter L."/>
            <person name="Beisel K.W."/>
            <person name="Bersano T."/>
            <person name="Bono H."/>
            <person name="Chalk A.M."/>
            <person name="Chiu K.P."/>
            <person name="Choudhary V."/>
            <person name="Christoffels A."/>
            <person name="Clutterbuck D.R."/>
            <person name="Crowe M.L."/>
            <person name="Dalla E."/>
            <person name="Dalrymple B.P."/>
            <person name="de Bono B."/>
            <person name="Della Gatta G."/>
            <person name="di Bernardo D."/>
            <person name="Down T."/>
            <person name="Engstrom P."/>
            <person name="Fagiolini M."/>
            <person name="Faulkner G."/>
            <person name="Fletcher C.F."/>
            <person name="Fukushima T."/>
            <person name="Furuno M."/>
            <person name="Futaki S."/>
            <person name="Gariboldi M."/>
            <person name="Georgii-Hemming P."/>
            <person name="Gingeras T.R."/>
            <person name="Gojobori T."/>
            <person name="Green R.E."/>
            <person name="Gustincich S."/>
            <person name="Harbers M."/>
            <person name="Hayashi Y."/>
            <person name="Hensch T.K."/>
            <person name="Hirokawa N."/>
            <person name="Hill D."/>
            <person name="Huminiecki L."/>
            <person name="Iacono M."/>
            <person name="Ikeo K."/>
            <person name="Iwama A."/>
            <person name="Ishikawa T."/>
            <person name="Jakt M."/>
            <person name="Kanapin A."/>
            <person name="Katoh M."/>
            <person name="Kawasawa Y."/>
            <person name="Kelso J."/>
            <person name="Kitamura H."/>
            <person name="Kitano H."/>
            <person name="Kollias G."/>
            <person name="Krishnan S.P."/>
            <person name="Kruger A."/>
            <person name="Kummerfeld S.K."/>
            <person name="Kurochkin I.V."/>
            <person name="Lareau L.F."/>
            <person name="Lazarevic D."/>
            <person name="Lipovich L."/>
            <person name="Liu J."/>
            <person name="Liuni S."/>
            <person name="McWilliam S."/>
            <person name="Madan Babu M."/>
            <person name="Madera M."/>
            <person name="Marchionni L."/>
            <person name="Matsuda H."/>
            <person name="Matsuzawa S."/>
            <person name="Miki H."/>
            <person name="Mignone F."/>
            <person name="Miyake S."/>
            <person name="Morris K."/>
            <person name="Mottagui-Tabar S."/>
            <person name="Mulder N."/>
            <person name="Nakano N."/>
            <person name="Nakauchi H."/>
            <person name="Ng P."/>
            <person name="Nilsson R."/>
            <person name="Nishiguchi S."/>
            <person name="Nishikawa S."/>
            <person name="Nori F."/>
            <person name="Ohara O."/>
            <person name="Okazaki Y."/>
            <person name="Orlando V."/>
            <person name="Pang K.C."/>
            <person name="Pavan W.J."/>
            <person name="Pavesi G."/>
            <person name="Pesole G."/>
            <person name="Petrovsky N."/>
            <person name="Piazza S."/>
            <person name="Reed J."/>
            <person name="Reid J.F."/>
            <person name="Ring B.Z."/>
            <person name="Ringwald M."/>
            <person name="Rost B."/>
            <person name="Ruan Y."/>
            <person name="Salzberg S.L."/>
            <person name="Sandelin A."/>
            <person name="Schneider C."/>
            <person name="Schoenbach C."/>
            <person name="Sekiguchi K."/>
            <person name="Semple C.A."/>
            <person name="Seno S."/>
            <person name="Sessa L."/>
            <person name="Sheng Y."/>
            <person name="Shibata Y."/>
            <person name="Shimada H."/>
            <person name="Shimada K."/>
            <person name="Silva D."/>
            <person name="Sinclair B."/>
            <person name="Sperling S."/>
            <person name="Stupka E."/>
            <person name="Sugiura K."/>
            <person name="Sultana R."/>
            <person name="Takenaka Y."/>
            <person name="Taki K."/>
            <person name="Tammoja K."/>
            <person name="Tan S.L."/>
            <person name="Tang S."/>
            <person name="Taylor M.S."/>
            <person name="Tegner J."/>
            <person name="Teichmann S.A."/>
            <person name="Ueda H.R."/>
            <person name="van Nimwegen E."/>
            <person name="Verardo R."/>
            <person name="Wei C.L."/>
            <person name="Yagi K."/>
            <person name="Yamanishi H."/>
            <person name="Zabarovsky E."/>
            <person name="Zhu S."/>
            <person name="Zimmer A."/>
            <person name="Hide W."/>
            <person name="Bult C."/>
            <person name="Grimmond S.M."/>
            <person name="Teasdale R.D."/>
            <person name="Liu E.T."/>
            <person name="Brusic V."/>
            <person name="Quackenbush J."/>
            <person name="Wahlestedt C."/>
            <person name="Mattick J.S."/>
            <person name="Hume D.A."/>
            <person name="Kai C."/>
            <person name="Sasaki D."/>
            <person name="Tomaru Y."/>
            <person name="Fukuda S."/>
            <person name="Kanamori-Katayama M."/>
            <person name="Suzuki M."/>
            <person name="Aoki J."/>
            <person name="Arakawa T."/>
            <person name="Iida J."/>
            <person name="Imamura K."/>
            <person name="Itoh M."/>
            <person name="Kato T."/>
            <person name="Kawaji H."/>
            <person name="Kawagashira N."/>
            <person name="Kawashima T."/>
            <person name="Kojima M."/>
            <person name="Kondo S."/>
            <person name="Konno H."/>
            <person name="Nakano K."/>
            <person name="Ninomiya N."/>
            <person name="Nishio T."/>
            <person name="Okada M."/>
            <person name="Plessy C."/>
            <person name="Shibata K."/>
            <person name="Shiraki T."/>
            <person name="Suzuki S."/>
            <person name="Tagami M."/>
            <person name="Waki K."/>
            <person name="Watahiki A."/>
            <person name="Okamura-Oho Y."/>
            <person name="Suzuki H."/>
            <person name="Kawai J."/>
            <person name="Hayashizaki Y."/>
        </authorList>
    </citation>
    <scope>NUCLEOTIDE SEQUENCE [LARGE SCALE MRNA]</scope>
    <source>
        <strain>C57BL/6J</strain>
        <tissue>Cerebellum</tissue>
        <tissue>Liver</tissue>
    </source>
</reference>
<reference key="4">
    <citation type="journal article" date="2004" name="Genome Res.">
        <title>The status, quality, and expansion of the NIH full-length cDNA project: the Mammalian Gene Collection (MGC).</title>
        <authorList>
            <consortium name="The MGC Project Team"/>
        </authorList>
    </citation>
    <scope>NUCLEOTIDE SEQUENCE [LARGE SCALE MRNA]</scope>
    <source>
        <tissue>Mammary gland</tissue>
    </source>
</reference>
<reference key="5">
    <citation type="journal article" date="2010" name="Cell">
        <title>A tissue-specific atlas of mouse protein phosphorylation and expression.</title>
        <authorList>
            <person name="Huttlin E.L."/>
            <person name="Jedrychowski M.P."/>
            <person name="Elias J.E."/>
            <person name="Goswami T."/>
            <person name="Rad R."/>
            <person name="Beausoleil S.A."/>
            <person name="Villen J."/>
            <person name="Haas W."/>
            <person name="Sowa M.E."/>
            <person name="Gygi S.P."/>
        </authorList>
    </citation>
    <scope>IDENTIFICATION BY MASS SPECTROMETRY [LARGE SCALE ANALYSIS]</scope>
    <source>
        <tissue>Brain</tissue>
        <tissue>Brown adipose tissue</tissue>
        <tissue>Heart</tissue>
        <tissue>Kidney</tissue>
        <tissue>Liver</tissue>
        <tissue>Lung</tissue>
        <tissue>Pancreas</tissue>
    </source>
</reference>
<organism>
    <name type="scientific">Mus musculus</name>
    <name type="common">Mouse</name>
    <dbReference type="NCBI Taxonomy" id="10090"/>
    <lineage>
        <taxon>Eukaryota</taxon>
        <taxon>Metazoa</taxon>
        <taxon>Chordata</taxon>
        <taxon>Craniata</taxon>
        <taxon>Vertebrata</taxon>
        <taxon>Euteleostomi</taxon>
        <taxon>Mammalia</taxon>
        <taxon>Eutheria</taxon>
        <taxon>Euarchontoglires</taxon>
        <taxon>Glires</taxon>
        <taxon>Rodentia</taxon>
        <taxon>Myomorpha</taxon>
        <taxon>Muroidea</taxon>
        <taxon>Muridae</taxon>
        <taxon>Murinae</taxon>
        <taxon>Mus</taxon>
        <taxon>Mus</taxon>
    </lineage>
</organism>
<gene>
    <name type="primary">Hnmt</name>
    <name type="synonym">Hmt</name>
</gene>
<proteinExistence type="evidence at protein level"/>